<protein>
    <recommendedName>
        <fullName evidence="1">Large ribosomal subunit protein bL32</fullName>
    </recommendedName>
    <alternativeName>
        <fullName evidence="3">50S ribosomal protein L32</fullName>
    </alternativeName>
</protein>
<comment type="similarity">
    <text evidence="1">Belongs to the bacterial ribosomal protein bL32 family.</text>
</comment>
<keyword id="KW-1185">Reference proteome</keyword>
<keyword id="KW-0687">Ribonucleoprotein</keyword>
<keyword id="KW-0689">Ribosomal protein</keyword>
<accession>Q5M278</accession>
<sequence>MAVPARHTSKAKKNKRRTHYKLTAPSVQFDETTGDYSRSHRVSLKGYYKGRKIAKAASAE</sequence>
<reference key="1">
    <citation type="journal article" date="2004" name="Nat. Biotechnol.">
        <title>Complete sequence and comparative genome analysis of the dairy bacterium Streptococcus thermophilus.</title>
        <authorList>
            <person name="Bolotin A."/>
            <person name="Quinquis B."/>
            <person name="Renault P."/>
            <person name="Sorokin A."/>
            <person name="Ehrlich S.D."/>
            <person name="Kulakauskas S."/>
            <person name="Lapidus A."/>
            <person name="Goltsman E."/>
            <person name="Mazur M."/>
            <person name="Pusch G.D."/>
            <person name="Fonstein M."/>
            <person name="Overbeek R."/>
            <person name="Kyprides N."/>
            <person name="Purnelle B."/>
            <person name="Prozzi D."/>
            <person name="Ngui K."/>
            <person name="Masuy D."/>
            <person name="Hancy F."/>
            <person name="Burteau S."/>
            <person name="Boutry M."/>
            <person name="Delcour J."/>
            <person name="Goffeau A."/>
            <person name="Hols P."/>
        </authorList>
    </citation>
    <scope>NUCLEOTIDE SEQUENCE [LARGE SCALE GENOMIC DNA]</scope>
    <source>
        <strain>ATCC BAA-250 / LMG 18311</strain>
    </source>
</reference>
<gene>
    <name evidence="1" type="primary">rpmF</name>
    <name type="ordered locus">stu1974</name>
</gene>
<name>RL32_STRT2</name>
<proteinExistence type="inferred from homology"/>
<feature type="chain" id="PRO_0000225770" description="Large ribosomal subunit protein bL32">
    <location>
        <begin position="1"/>
        <end position="60"/>
    </location>
</feature>
<feature type="region of interest" description="Disordered" evidence="2">
    <location>
        <begin position="1"/>
        <end position="21"/>
    </location>
</feature>
<feature type="compositionally biased region" description="Basic residues" evidence="2">
    <location>
        <begin position="7"/>
        <end position="20"/>
    </location>
</feature>
<evidence type="ECO:0000255" key="1">
    <source>
        <dbReference type="HAMAP-Rule" id="MF_00340"/>
    </source>
</evidence>
<evidence type="ECO:0000256" key="2">
    <source>
        <dbReference type="SAM" id="MobiDB-lite"/>
    </source>
</evidence>
<evidence type="ECO:0000305" key="3"/>
<dbReference type="EMBL" id="CP000023">
    <property type="protein sequence ID" value="AAV61568.1"/>
    <property type="molecule type" value="Genomic_DNA"/>
</dbReference>
<dbReference type="RefSeq" id="WP_002952208.1">
    <property type="nucleotide sequence ID" value="NC_006448.1"/>
</dbReference>
<dbReference type="SMR" id="Q5M278"/>
<dbReference type="STRING" id="264199.stu1974"/>
<dbReference type="GeneID" id="66899700"/>
<dbReference type="KEGG" id="stl:stu1974"/>
<dbReference type="eggNOG" id="COG0333">
    <property type="taxonomic scope" value="Bacteria"/>
</dbReference>
<dbReference type="HOGENOM" id="CLU_129084_2_3_9"/>
<dbReference type="Proteomes" id="UP000001170">
    <property type="component" value="Chromosome"/>
</dbReference>
<dbReference type="GO" id="GO:0015934">
    <property type="term" value="C:large ribosomal subunit"/>
    <property type="evidence" value="ECO:0007669"/>
    <property type="project" value="InterPro"/>
</dbReference>
<dbReference type="GO" id="GO:0003735">
    <property type="term" value="F:structural constituent of ribosome"/>
    <property type="evidence" value="ECO:0007669"/>
    <property type="project" value="InterPro"/>
</dbReference>
<dbReference type="GO" id="GO:0006412">
    <property type="term" value="P:translation"/>
    <property type="evidence" value="ECO:0007669"/>
    <property type="project" value="UniProtKB-UniRule"/>
</dbReference>
<dbReference type="HAMAP" id="MF_00340">
    <property type="entry name" value="Ribosomal_bL32"/>
    <property type="match status" value="1"/>
</dbReference>
<dbReference type="InterPro" id="IPR002677">
    <property type="entry name" value="Ribosomal_bL32"/>
</dbReference>
<dbReference type="InterPro" id="IPR044957">
    <property type="entry name" value="Ribosomal_bL32_bact"/>
</dbReference>
<dbReference type="InterPro" id="IPR011332">
    <property type="entry name" value="Ribosomal_zn-bd"/>
</dbReference>
<dbReference type="NCBIfam" id="TIGR01031">
    <property type="entry name" value="rpmF_bact"/>
    <property type="match status" value="1"/>
</dbReference>
<dbReference type="PANTHER" id="PTHR35534">
    <property type="entry name" value="50S RIBOSOMAL PROTEIN L32"/>
    <property type="match status" value="1"/>
</dbReference>
<dbReference type="PANTHER" id="PTHR35534:SF1">
    <property type="entry name" value="LARGE RIBOSOMAL SUBUNIT PROTEIN BL32"/>
    <property type="match status" value="1"/>
</dbReference>
<dbReference type="Pfam" id="PF01783">
    <property type="entry name" value="Ribosomal_L32p"/>
    <property type="match status" value="1"/>
</dbReference>
<dbReference type="SUPFAM" id="SSF57829">
    <property type="entry name" value="Zn-binding ribosomal proteins"/>
    <property type="match status" value="1"/>
</dbReference>
<organism>
    <name type="scientific">Streptococcus thermophilus (strain ATCC BAA-250 / LMG 18311)</name>
    <dbReference type="NCBI Taxonomy" id="264199"/>
    <lineage>
        <taxon>Bacteria</taxon>
        <taxon>Bacillati</taxon>
        <taxon>Bacillota</taxon>
        <taxon>Bacilli</taxon>
        <taxon>Lactobacillales</taxon>
        <taxon>Streptococcaceae</taxon>
        <taxon>Streptococcus</taxon>
    </lineage>
</organism>